<sequence length="156" mass="17642">MLNRTILVGRLTRDPELRTTQSGVNVASFTLAVNRTFTNAQGEREADFINIIVFKKQAENVNKYLSKGSLAGVDGRLQTRNYENKEGQRVYVTEVIADSIQFLEPKNSNDTQQDLYQQQVQQTRGQSQYSNNKPVKDNPFANANGPIELNDDDLPF</sequence>
<gene>
    <name type="primary">ssb</name>
    <name type="ordered locus">SAV1983</name>
</gene>
<evidence type="ECO:0000255" key="1">
    <source>
        <dbReference type="HAMAP-Rule" id="MF_00984"/>
    </source>
</evidence>
<evidence type="ECO:0000256" key="2">
    <source>
        <dbReference type="SAM" id="MobiDB-lite"/>
    </source>
</evidence>
<name>SSB1_STAAM</name>
<protein>
    <recommendedName>
        <fullName evidence="1">Single-stranded DNA-binding protein 1</fullName>
        <shortName evidence="1">SSB 1</shortName>
    </recommendedName>
</protein>
<dbReference type="EMBL" id="BA000017">
    <property type="protein sequence ID" value="BAB58145.1"/>
    <property type="molecule type" value="Genomic_DNA"/>
</dbReference>
<dbReference type="RefSeq" id="WP_000934760.1">
    <property type="nucleotide sequence ID" value="NC_002758.2"/>
</dbReference>
<dbReference type="SMR" id="Q931K4"/>
<dbReference type="KEGG" id="sav:SAV1983"/>
<dbReference type="HOGENOM" id="CLU_078758_6_1_9"/>
<dbReference type="PhylomeDB" id="Q931K4"/>
<dbReference type="Proteomes" id="UP000002481">
    <property type="component" value="Chromosome"/>
</dbReference>
<dbReference type="GO" id="GO:0009295">
    <property type="term" value="C:nucleoid"/>
    <property type="evidence" value="ECO:0007669"/>
    <property type="project" value="TreeGrafter"/>
</dbReference>
<dbReference type="GO" id="GO:0003697">
    <property type="term" value="F:single-stranded DNA binding"/>
    <property type="evidence" value="ECO:0007669"/>
    <property type="project" value="UniProtKB-UniRule"/>
</dbReference>
<dbReference type="GO" id="GO:0006310">
    <property type="term" value="P:DNA recombination"/>
    <property type="evidence" value="ECO:0007669"/>
    <property type="project" value="UniProtKB-UniRule"/>
</dbReference>
<dbReference type="GO" id="GO:0006281">
    <property type="term" value="P:DNA repair"/>
    <property type="evidence" value="ECO:0007669"/>
    <property type="project" value="UniProtKB-UniRule"/>
</dbReference>
<dbReference type="GO" id="GO:0006260">
    <property type="term" value="P:DNA replication"/>
    <property type="evidence" value="ECO:0007669"/>
    <property type="project" value="UniProtKB-UniRule"/>
</dbReference>
<dbReference type="CDD" id="cd04496">
    <property type="entry name" value="SSB_OBF"/>
    <property type="match status" value="1"/>
</dbReference>
<dbReference type="FunFam" id="2.40.50.140:FF:000084">
    <property type="entry name" value="Single-stranded DNA-binding protein"/>
    <property type="match status" value="1"/>
</dbReference>
<dbReference type="Gene3D" id="2.40.50.140">
    <property type="entry name" value="Nucleic acid-binding proteins"/>
    <property type="match status" value="1"/>
</dbReference>
<dbReference type="HAMAP" id="MF_00984">
    <property type="entry name" value="SSB"/>
    <property type="match status" value="1"/>
</dbReference>
<dbReference type="InterPro" id="IPR012340">
    <property type="entry name" value="NA-bd_OB-fold"/>
</dbReference>
<dbReference type="InterPro" id="IPR000424">
    <property type="entry name" value="Primosome_PriB/ssb"/>
</dbReference>
<dbReference type="InterPro" id="IPR011344">
    <property type="entry name" value="ssDNA-bd"/>
</dbReference>
<dbReference type="NCBIfam" id="TIGR00621">
    <property type="entry name" value="ssb"/>
    <property type="match status" value="1"/>
</dbReference>
<dbReference type="PANTHER" id="PTHR10302">
    <property type="entry name" value="SINGLE-STRANDED DNA-BINDING PROTEIN"/>
    <property type="match status" value="1"/>
</dbReference>
<dbReference type="PANTHER" id="PTHR10302:SF27">
    <property type="entry name" value="SINGLE-STRANDED DNA-BINDING PROTEIN"/>
    <property type="match status" value="1"/>
</dbReference>
<dbReference type="Pfam" id="PF00436">
    <property type="entry name" value="SSB"/>
    <property type="match status" value="1"/>
</dbReference>
<dbReference type="PIRSF" id="PIRSF002070">
    <property type="entry name" value="SSB"/>
    <property type="match status" value="1"/>
</dbReference>
<dbReference type="SUPFAM" id="SSF50249">
    <property type="entry name" value="Nucleic acid-binding proteins"/>
    <property type="match status" value="1"/>
</dbReference>
<dbReference type="PROSITE" id="PS50935">
    <property type="entry name" value="SSB"/>
    <property type="match status" value="1"/>
</dbReference>
<comment type="function">
    <text evidence="1">Plays an important role in DNA replication, recombination and repair. Binds to ssDNA and to an array of partner proteins to recruit them to their sites of action during DNA metabolism.</text>
</comment>
<comment type="subunit">
    <text evidence="1">Homotetramer.</text>
</comment>
<accession>Q931K4</accession>
<reference key="1">
    <citation type="journal article" date="2001" name="Lancet">
        <title>Whole genome sequencing of meticillin-resistant Staphylococcus aureus.</title>
        <authorList>
            <person name="Kuroda M."/>
            <person name="Ohta T."/>
            <person name="Uchiyama I."/>
            <person name="Baba T."/>
            <person name="Yuzawa H."/>
            <person name="Kobayashi I."/>
            <person name="Cui L."/>
            <person name="Oguchi A."/>
            <person name="Aoki K."/>
            <person name="Nagai Y."/>
            <person name="Lian J.-Q."/>
            <person name="Ito T."/>
            <person name="Kanamori M."/>
            <person name="Matsumaru H."/>
            <person name="Maruyama A."/>
            <person name="Murakami H."/>
            <person name="Hosoyama A."/>
            <person name="Mizutani-Ui Y."/>
            <person name="Takahashi N.K."/>
            <person name="Sawano T."/>
            <person name="Inoue R."/>
            <person name="Kaito C."/>
            <person name="Sekimizu K."/>
            <person name="Hirakawa H."/>
            <person name="Kuhara S."/>
            <person name="Goto S."/>
            <person name="Yabuzaki J."/>
            <person name="Kanehisa M."/>
            <person name="Yamashita A."/>
            <person name="Oshima K."/>
            <person name="Furuya K."/>
            <person name="Yoshino C."/>
            <person name="Shiba T."/>
            <person name="Hattori M."/>
            <person name="Ogasawara N."/>
            <person name="Hayashi H."/>
            <person name="Hiramatsu K."/>
        </authorList>
    </citation>
    <scope>NUCLEOTIDE SEQUENCE [LARGE SCALE GENOMIC DNA]</scope>
    <source>
        <strain>Mu50 / ATCC 700699</strain>
    </source>
</reference>
<proteinExistence type="inferred from homology"/>
<organism>
    <name type="scientific">Staphylococcus aureus (strain Mu50 / ATCC 700699)</name>
    <dbReference type="NCBI Taxonomy" id="158878"/>
    <lineage>
        <taxon>Bacteria</taxon>
        <taxon>Bacillati</taxon>
        <taxon>Bacillota</taxon>
        <taxon>Bacilli</taxon>
        <taxon>Bacillales</taxon>
        <taxon>Staphylococcaceae</taxon>
        <taxon>Staphylococcus</taxon>
    </lineage>
</organism>
<keyword id="KW-0227">DNA damage</keyword>
<keyword id="KW-0233">DNA recombination</keyword>
<keyword id="KW-0234">DNA repair</keyword>
<keyword id="KW-0235">DNA replication</keyword>
<keyword id="KW-0238">DNA-binding</keyword>
<feature type="chain" id="PRO_0000096100" description="Single-stranded DNA-binding protein 1">
    <location>
        <begin position="1"/>
        <end position="156"/>
    </location>
</feature>
<feature type="domain" description="SSB" evidence="1">
    <location>
        <begin position="1"/>
        <end position="104"/>
    </location>
</feature>
<feature type="region of interest" description="Disordered" evidence="2">
    <location>
        <begin position="104"/>
        <end position="156"/>
    </location>
</feature>
<feature type="short sequence motif" description="Important for interaction with partner proteins" evidence="1">
    <location>
        <begin position="151"/>
        <end position="156"/>
    </location>
</feature>
<feature type="compositionally biased region" description="Low complexity" evidence="2">
    <location>
        <begin position="112"/>
        <end position="128"/>
    </location>
</feature>